<keyword id="KW-0963">Cytoplasm</keyword>
<keyword id="KW-0227">DNA damage</keyword>
<keyword id="KW-0234">DNA repair</keyword>
<keyword id="KW-0235">DNA replication</keyword>
<keyword id="KW-0238">DNA-binding</keyword>
<keyword id="KW-0239">DNA-directed DNA polymerase</keyword>
<keyword id="KW-0460">Magnesium</keyword>
<keyword id="KW-0479">Metal-binding</keyword>
<keyword id="KW-0515">Mutator protein</keyword>
<keyword id="KW-0548">Nucleotidyltransferase</keyword>
<keyword id="KW-0808">Transferase</keyword>
<proteinExistence type="inferred from homology"/>
<organism>
    <name type="scientific">Bacillus cereus (strain ZK / E33L)</name>
    <dbReference type="NCBI Taxonomy" id="288681"/>
    <lineage>
        <taxon>Bacteria</taxon>
        <taxon>Bacillati</taxon>
        <taxon>Bacillota</taxon>
        <taxon>Bacilli</taxon>
        <taxon>Bacillales</taxon>
        <taxon>Bacillaceae</taxon>
        <taxon>Bacillus</taxon>
        <taxon>Bacillus cereus group</taxon>
    </lineage>
</organism>
<comment type="function">
    <text evidence="1">Poorly processive, error-prone DNA polymerase involved in untargeted mutagenesis. Copies undamaged DNA at stalled replication forks, which arise in vivo from mismatched or misaligned primer ends. These misaligned primers can be extended by PolIV. Exhibits no 3'-5' exonuclease (proofreading) activity. May be involved in translesional synthesis, in conjunction with the beta clamp from PolIII.</text>
</comment>
<comment type="catalytic activity">
    <reaction evidence="1">
        <text>DNA(n) + a 2'-deoxyribonucleoside 5'-triphosphate = DNA(n+1) + diphosphate</text>
        <dbReference type="Rhea" id="RHEA:22508"/>
        <dbReference type="Rhea" id="RHEA-COMP:17339"/>
        <dbReference type="Rhea" id="RHEA-COMP:17340"/>
        <dbReference type="ChEBI" id="CHEBI:33019"/>
        <dbReference type="ChEBI" id="CHEBI:61560"/>
        <dbReference type="ChEBI" id="CHEBI:173112"/>
        <dbReference type="EC" id="2.7.7.7"/>
    </reaction>
</comment>
<comment type="cofactor">
    <cofactor evidence="1">
        <name>Mg(2+)</name>
        <dbReference type="ChEBI" id="CHEBI:18420"/>
    </cofactor>
    <text evidence="1">Binds 2 magnesium ions per subunit.</text>
</comment>
<comment type="subunit">
    <text evidence="1">Monomer.</text>
</comment>
<comment type="subcellular location">
    <subcellularLocation>
        <location evidence="1">Cytoplasm</location>
    </subcellularLocation>
</comment>
<comment type="similarity">
    <text evidence="1">Belongs to the DNA polymerase type-Y family.</text>
</comment>
<accession>Q635E0</accession>
<feature type="chain" id="PRO_1000084879" description="DNA polymerase IV">
    <location>
        <begin position="1"/>
        <end position="415"/>
    </location>
</feature>
<feature type="domain" description="UmuC" evidence="1">
    <location>
        <begin position="15"/>
        <end position="196"/>
    </location>
</feature>
<feature type="region of interest" description="Disordered" evidence="2">
    <location>
        <begin position="238"/>
        <end position="260"/>
    </location>
</feature>
<feature type="compositionally biased region" description="Polar residues" evidence="2">
    <location>
        <begin position="246"/>
        <end position="260"/>
    </location>
</feature>
<feature type="active site" evidence="1">
    <location>
        <position position="116"/>
    </location>
</feature>
<feature type="binding site" evidence="1">
    <location>
        <position position="19"/>
    </location>
    <ligand>
        <name>Mg(2+)</name>
        <dbReference type="ChEBI" id="CHEBI:18420"/>
    </ligand>
</feature>
<feature type="binding site" evidence="1">
    <location>
        <position position="115"/>
    </location>
    <ligand>
        <name>Mg(2+)</name>
        <dbReference type="ChEBI" id="CHEBI:18420"/>
    </ligand>
</feature>
<feature type="site" description="Substrate discrimination" evidence="1">
    <location>
        <position position="24"/>
    </location>
</feature>
<reference key="1">
    <citation type="journal article" date="2006" name="J. Bacteriol.">
        <title>Pathogenomic sequence analysis of Bacillus cereus and Bacillus thuringiensis isolates closely related to Bacillus anthracis.</title>
        <authorList>
            <person name="Han C.S."/>
            <person name="Xie G."/>
            <person name="Challacombe J.F."/>
            <person name="Altherr M.R."/>
            <person name="Bhotika S.S."/>
            <person name="Bruce D."/>
            <person name="Campbell C.S."/>
            <person name="Campbell M.L."/>
            <person name="Chen J."/>
            <person name="Chertkov O."/>
            <person name="Cleland C."/>
            <person name="Dimitrijevic M."/>
            <person name="Doggett N.A."/>
            <person name="Fawcett J.J."/>
            <person name="Glavina T."/>
            <person name="Goodwin L.A."/>
            <person name="Hill K.K."/>
            <person name="Hitchcock P."/>
            <person name="Jackson P.J."/>
            <person name="Keim P."/>
            <person name="Kewalramani A.R."/>
            <person name="Longmire J."/>
            <person name="Lucas S."/>
            <person name="Malfatti S."/>
            <person name="McMurry K."/>
            <person name="Meincke L.J."/>
            <person name="Misra M."/>
            <person name="Moseman B.L."/>
            <person name="Mundt M."/>
            <person name="Munk A.C."/>
            <person name="Okinaka R.T."/>
            <person name="Parson-Quintana B."/>
            <person name="Reilly L.P."/>
            <person name="Richardson P."/>
            <person name="Robinson D.L."/>
            <person name="Rubin E."/>
            <person name="Saunders E."/>
            <person name="Tapia R."/>
            <person name="Tesmer J.G."/>
            <person name="Thayer N."/>
            <person name="Thompson L.S."/>
            <person name="Tice H."/>
            <person name="Ticknor L.O."/>
            <person name="Wills P.L."/>
            <person name="Brettin T.S."/>
            <person name="Gilna P."/>
        </authorList>
    </citation>
    <scope>NUCLEOTIDE SEQUENCE [LARGE SCALE GENOMIC DNA]</scope>
    <source>
        <strain>ZK / E33L</strain>
    </source>
</reference>
<dbReference type="EC" id="2.7.7.7" evidence="1"/>
<dbReference type="EMBL" id="CP000001">
    <property type="protein sequence ID" value="AAU16372.1"/>
    <property type="molecule type" value="Genomic_DNA"/>
</dbReference>
<dbReference type="SMR" id="Q635E0"/>
<dbReference type="KEGG" id="bcz:BCE33L3897"/>
<dbReference type="Proteomes" id="UP000002612">
    <property type="component" value="Chromosome"/>
</dbReference>
<dbReference type="GO" id="GO:0005829">
    <property type="term" value="C:cytosol"/>
    <property type="evidence" value="ECO:0007669"/>
    <property type="project" value="TreeGrafter"/>
</dbReference>
<dbReference type="GO" id="GO:0003684">
    <property type="term" value="F:damaged DNA binding"/>
    <property type="evidence" value="ECO:0007669"/>
    <property type="project" value="InterPro"/>
</dbReference>
<dbReference type="GO" id="GO:0003887">
    <property type="term" value="F:DNA-directed DNA polymerase activity"/>
    <property type="evidence" value="ECO:0007669"/>
    <property type="project" value="UniProtKB-UniRule"/>
</dbReference>
<dbReference type="GO" id="GO:0000287">
    <property type="term" value="F:magnesium ion binding"/>
    <property type="evidence" value="ECO:0007669"/>
    <property type="project" value="UniProtKB-UniRule"/>
</dbReference>
<dbReference type="GO" id="GO:0006261">
    <property type="term" value="P:DNA-templated DNA replication"/>
    <property type="evidence" value="ECO:0007669"/>
    <property type="project" value="UniProtKB-UniRule"/>
</dbReference>
<dbReference type="GO" id="GO:0042276">
    <property type="term" value="P:error-prone translesion synthesis"/>
    <property type="evidence" value="ECO:0007669"/>
    <property type="project" value="TreeGrafter"/>
</dbReference>
<dbReference type="GO" id="GO:0009432">
    <property type="term" value="P:SOS response"/>
    <property type="evidence" value="ECO:0007669"/>
    <property type="project" value="TreeGrafter"/>
</dbReference>
<dbReference type="CDD" id="cd03586">
    <property type="entry name" value="PolY_Pol_IV_kappa"/>
    <property type="match status" value="1"/>
</dbReference>
<dbReference type="FunFam" id="1.10.150.20:FF:000061">
    <property type="entry name" value="DNA polymerase IV"/>
    <property type="match status" value="1"/>
</dbReference>
<dbReference type="FunFam" id="3.30.1490.100:FF:000012">
    <property type="entry name" value="DNA polymerase IV"/>
    <property type="match status" value="1"/>
</dbReference>
<dbReference type="FunFam" id="3.40.1170.60:FF:000001">
    <property type="entry name" value="DNA polymerase IV"/>
    <property type="match status" value="1"/>
</dbReference>
<dbReference type="Gene3D" id="3.30.70.270">
    <property type="match status" value="1"/>
</dbReference>
<dbReference type="Gene3D" id="3.40.1170.60">
    <property type="match status" value="1"/>
</dbReference>
<dbReference type="Gene3D" id="1.10.150.20">
    <property type="entry name" value="5' to 3' exonuclease, C-terminal subdomain"/>
    <property type="match status" value="1"/>
</dbReference>
<dbReference type="Gene3D" id="3.30.1490.100">
    <property type="entry name" value="DNA polymerase, Y-family, little finger domain"/>
    <property type="match status" value="1"/>
</dbReference>
<dbReference type="HAMAP" id="MF_01113">
    <property type="entry name" value="DNApol_IV"/>
    <property type="match status" value="1"/>
</dbReference>
<dbReference type="InterPro" id="IPR043502">
    <property type="entry name" value="DNA/RNA_pol_sf"/>
</dbReference>
<dbReference type="InterPro" id="IPR036775">
    <property type="entry name" value="DNA_pol_Y-fam_lit_finger_sf"/>
</dbReference>
<dbReference type="InterPro" id="IPR017961">
    <property type="entry name" value="DNA_pol_Y-fam_little_finger"/>
</dbReference>
<dbReference type="InterPro" id="IPR050116">
    <property type="entry name" value="DNA_polymerase-Y"/>
</dbReference>
<dbReference type="InterPro" id="IPR022880">
    <property type="entry name" value="DNApol_IV"/>
</dbReference>
<dbReference type="InterPro" id="IPR024728">
    <property type="entry name" value="PolY_HhH_motif"/>
</dbReference>
<dbReference type="InterPro" id="IPR043128">
    <property type="entry name" value="Rev_trsase/Diguanyl_cyclase"/>
</dbReference>
<dbReference type="InterPro" id="IPR001126">
    <property type="entry name" value="UmuC"/>
</dbReference>
<dbReference type="NCBIfam" id="NF002492">
    <property type="entry name" value="PRK01810.1"/>
    <property type="match status" value="1"/>
</dbReference>
<dbReference type="NCBIfam" id="NF002677">
    <property type="entry name" value="PRK02406.1"/>
    <property type="match status" value="1"/>
</dbReference>
<dbReference type="PANTHER" id="PTHR11076:SF33">
    <property type="entry name" value="DNA POLYMERASE KAPPA"/>
    <property type="match status" value="1"/>
</dbReference>
<dbReference type="PANTHER" id="PTHR11076">
    <property type="entry name" value="DNA REPAIR POLYMERASE UMUC / TRANSFERASE FAMILY MEMBER"/>
    <property type="match status" value="1"/>
</dbReference>
<dbReference type="Pfam" id="PF00817">
    <property type="entry name" value="IMS"/>
    <property type="match status" value="1"/>
</dbReference>
<dbReference type="Pfam" id="PF11799">
    <property type="entry name" value="IMS_C"/>
    <property type="match status" value="1"/>
</dbReference>
<dbReference type="Pfam" id="PF11798">
    <property type="entry name" value="IMS_HHH"/>
    <property type="match status" value="1"/>
</dbReference>
<dbReference type="SUPFAM" id="SSF56672">
    <property type="entry name" value="DNA/RNA polymerases"/>
    <property type="match status" value="1"/>
</dbReference>
<dbReference type="SUPFAM" id="SSF100879">
    <property type="entry name" value="Lesion bypass DNA polymerase (Y-family), little finger domain"/>
    <property type="match status" value="1"/>
</dbReference>
<dbReference type="PROSITE" id="PS50173">
    <property type="entry name" value="UMUC"/>
    <property type="match status" value="1"/>
</dbReference>
<sequence>MSTMREMYPKKGRVILHVDMNCFFASVEIAHDSSLQGKPLAVAGNEKERKGIIITCSYEAREYGIRTTMPLWEAKRLCPQLIVRRPNFTLYREASFQMFQILSRFTEKIQPVSIDEGYLDITDCYALGSPLEIAKMIQQALLTELQLPCSIGIAPNLFLAKTASDMKKPLGITVLRKRDIPEMIWPLPVGAMHGIGEKTAEKLNDIHIQTIEQLAKGNEHIIRAKIGKHGVDLQRRAKGMDDRQVDPSQMGQHKSVGNSMTFSKDMDEEKELLDMLERLSKSVSKRLQKRTLVSYNIQIMIKYHDRRTVTRSKQLKNAIWEERDIFQAASRLWKQHWDGDSVRLLGVTATEIEWKTESVKQLDLFSFEEDAKEEPLLAVIDQINDKYGMPLLQRGSQLLRKQEKSFQQKLESKFM</sequence>
<protein>
    <recommendedName>
        <fullName evidence="1">DNA polymerase IV</fullName>
        <shortName evidence="1">Pol IV</shortName>
        <ecNumber evidence="1">2.7.7.7</ecNumber>
    </recommendedName>
</protein>
<gene>
    <name evidence="1" type="primary">dinB</name>
    <name type="ordered locus">BCE33L3897</name>
</gene>
<name>DPO4_BACCZ</name>
<evidence type="ECO:0000255" key="1">
    <source>
        <dbReference type="HAMAP-Rule" id="MF_01113"/>
    </source>
</evidence>
<evidence type="ECO:0000256" key="2">
    <source>
        <dbReference type="SAM" id="MobiDB-lite"/>
    </source>
</evidence>